<feature type="chain" id="PRO_0000423501" description="Tubulin-folding cofactor E">
    <location>
        <begin position="1"/>
        <end position="531"/>
    </location>
</feature>
<feature type="domain" description="CAP-Gly" evidence="2">
    <location>
        <begin position="32"/>
        <end position="76"/>
    </location>
</feature>
<feature type="repeat" description="LRR 1">
    <location>
        <begin position="84"/>
        <end position="109"/>
    </location>
</feature>
<feature type="repeat" description="LRR 2">
    <location>
        <begin position="159"/>
        <end position="183"/>
    </location>
</feature>
<feature type="repeat" description="LRR 3">
    <location>
        <begin position="185"/>
        <end position="213"/>
    </location>
</feature>
<feature type="repeat" description="LRR 4">
    <location>
        <begin position="233"/>
        <end position="256"/>
    </location>
</feature>
<feature type="repeat" description="LRR 5">
    <location>
        <begin position="260"/>
        <end position="284"/>
    </location>
</feature>
<feature type="repeat" description="LRR 6">
    <location>
        <begin position="285"/>
        <end position="308"/>
    </location>
</feature>
<feature type="repeat" description="LRR 7">
    <location>
        <begin position="318"/>
        <end position="342"/>
    </location>
</feature>
<feature type="repeat" description="LRR 8">
    <location>
        <begin position="344"/>
        <end position="366"/>
    </location>
</feature>
<feature type="repeat" description="LRR 9">
    <location>
        <begin position="474"/>
        <end position="497"/>
    </location>
</feature>
<feature type="sequence conflict" description="In Ref. 1; AAM22962 and 6; AAM63142." evidence="5" ref="1 6">
    <original>Q</original>
    <variation>E</variation>
    <location>
        <position position="207"/>
    </location>
</feature>
<feature type="sequence conflict" description="In Ref. 1; AAM22962 and 6; AAM63142." evidence="5" ref="1 6">
    <original>V</original>
    <variation>L</variation>
    <location>
        <position position="347"/>
    </location>
</feature>
<proteinExistence type="evidence at transcript level"/>
<dbReference type="EMBL" id="AF486853">
    <property type="protein sequence ID" value="AAM22962.1"/>
    <property type="molecule type" value="mRNA"/>
</dbReference>
<dbReference type="EMBL" id="AC016163">
    <property type="protein sequence ID" value="AAG51824.1"/>
    <property type="status" value="ALT_SEQ"/>
    <property type="molecule type" value="Genomic_DNA"/>
</dbReference>
<dbReference type="EMBL" id="CP002684">
    <property type="protein sequence ID" value="AEE35201.1"/>
    <property type="molecule type" value="Genomic_DNA"/>
</dbReference>
<dbReference type="EMBL" id="AK118835">
    <property type="protein sequence ID" value="BAC43424.1"/>
    <property type="molecule type" value="mRNA"/>
</dbReference>
<dbReference type="EMBL" id="BT002403">
    <property type="protein sequence ID" value="AAO00763.1"/>
    <property type="molecule type" value="mRNA"/>
</dbReference>
<dbReference type="EMBL" id="BT008888">
    <property type="protein sequence ID" value="AAP68327.1"/>
    <property type="molecule type" value="mRNA"/>
</dbReference>
<dbReference type="EMBL" id="AY085930">
    <property type="protein sequence ID" value="AAM63142.1"/>
    <property type="molecule type" value="mRNA"/>
</dbReference>
<dbReference type="RefSeq" id="NP_565017.1">
    <property type="nucleotide sequence ID" value="NM_105813.4"/>
</dbReference>
<dbReference type="SMR" id="Q8GRL7"/>
<dbReference type="FunCoup" id="Q8GRL7">
    <property type="interactions" value="4101"/>
</dbReference>
<dbReference type="STRING" id="3702.Q8GRL7"/>
<dbReference type="PaxDb" id="3702-AT1G71440.1"/>
<dbReference type="ProteomicsDB" id="234160"/>
<dbReference type="DNASU" id="843485"/>
<dbReference type="EnsemblPlants" id="AT1G71440.1">
    <property type="protein sequence ID" value="AT1G71440.1"/>
    <property type="gene ID" value="AT1G71440"/>
</dbReference>
<dbReference type="GeneID" id="843485"/>
<dbReference type="Gramene" id="AT1G71440.1">
    <property type="protein sequence ID" value="AT1G71440.1"/>
    <property type="gene ID" value="AT1G71440"/>
</dbReference>
<dbReference type="KEGG" id="ath:AT1G71440"/>
<dbReference type="Araport" id="AT1G71440"/>
<dbReference type="TAIR" id="AT1G71440">
    <property type="gene designation" value="PFI"/>
</dbReference>
<dbReference type="eggNOG" id="KOG2982">
    <property type="taxonomic scope" value="Eukaryota"/>
</dbReference>
<dbReference type="HOGENOM" id="CLU_017716_5_0_1"/>
<dbReference type="InParanoid" id="Q8GRL7"/>
<dbReference type="OMA" id="SEESHMF"/>
<dbReference type="PhylomeDB" id="Q8GRL7"/>
<dbReference type="PRO" id="PR:Q8GRL7"/>
<dbReference type="Proteomes" id="UP000006548">
    <property type="component" value="Chromosome 1"/>
</dbReference>
<dbReference type="ExpressionAtlas" id="Q8GRL7">
    <property type="expression patterns" value="baseline and differential"/>
</dbReference>
<dbReference type="GO" id="GO:0009507">
    <property type="term" value="C:chloroplast"/>
    <property type="evidence" value="ECO:0007005"/>
    <property type="project" value="TAIR"/>
</dbReference>
<dbReference type="GO" id="GO:0009793">
    <property type="term" value="P:embryo development ending in seed dormancy"/>
    <property type="evidence" value="ECO:0000315"/>
    <property type="project" value="TAIR"/>
</dbReference>
<dbReference type="CDD" id="cd17044">
    <property type="entry name" value="Ubl_TBCE"/>
    <property type="match status" value="1"/>
</dbReference>
<dbReference type="FunFam" id="2.30.30.190:FF:000016">
    <property type="entry name" value="Tubulin-folding cofactor E"/>
    <property type="match status" value="1"/>
</dbReference>
<dbReference type="FunFam" id="3.10.20.90:FF:000187">
    <property type="entry name" value="Tubulin-folding cofactor E"/>
    <property type="match status" value="1"/>
</dbReference>
<dbReference type="FunFam" id="3.80.10.10:FF:000752">
    <property type="entry name" value="Tubulin-folding cofactor E"/>
    <property type="match status" value="1"/>
</dbReference>
<dbReference type="FunFam" id="3.80.10.10:FF:000882">
    <property type="entry name" value="Tubulin-folding cofactor E"/>
    <property type="match status" value="1"/>
</dbReference>
<dbReference type="Gene3D" id="2.30.30.190">
    <property type="entry name" value="CAP Gly-rich-like domain"/>
    <property type="match status" value="1"/>
</dbReference>
<dbReference type="Gene3D" id="3.10.20.90">
    <property type="entry name" value="Phosphatidylinositol 3-kinase Catalytic Subunit, Chain A, domain 1"/>
    <property type="match status" value="1"/>
</dbReference>
<dbReference type="Gene3D" id="3.80.10.10">
    <property type="entry name" value="Ribonuclease Inhibitor"/>
    <property type="match status" value="2"/>
</dbReference>
<dbReference type="InterPro" id="IPR036859">
    <property type="entry name" value="CAP-Gly_dom_sf"/>
</dbReference>
<dbReference type="InterPro" id="IPR000938">
    <property type="entry name" value="CAP-Gly_domain"/>
</dbReference>
<dbReference type="InterPro" id="IPR001611">
    <property type="entry name" value="Leu-rich_rpt"/>
</dbReference>
<dbReference type="InterPro" id="IPR003591">
    <property type="entry name" value="Leu-rich_rpt_typical-subtyp"/>
</dbReference>
<dbReference type="InterPro" id="IPR032675">
    <property type="entry name" value="LRR_dom_sf"/>
</dbReference>
<dbReference type="InterPro" id="IPR050836">
    <property type="entry name" value="SDS22/Internalin_LRR"/>
</dbReference>
<dbReference type="InterPro" id="IPR029071">
    <property type="entry name" value="Ubiquitin-like_domsf"/>
</dbReference>
<dbReference type="InterPro" id="IPR044079">
    <property type="entry name" value="Ubl_TBCE"/>
</dbReference>
<dbReference type="PANTHER" id="PTHR46652:SF7">
    <property type="entry name" value="LEUCINE-RICH REPEAT AND IQ DOMAIN-CONTAINING PROTEIN 1"/>
    <property type="match status" value="1"/>
</dbReference>
<dbReference type="PANTHER" id="PTHR46652">
    <property type="entry name" value="LEUCINE-RICH REPEAT AND IQ DOMAIN-CONTAINING PROTEIN 1-RELATED"/>
    <property type="match status" value="1"/>
</dbReference>
<dbReference type="Pfam" id="PF01302">
    <property type="entry name" value="CAP_GLY"/>
    <property type="match status" value="1"/>
</dbReference>
<dbReference type="Pfam" id="PF14580">
    <property type="entry name" value="LRR_9"/>
    <property type="match status" value="1"/>
</dbReference>
<dbReference type="SMART" id="SM01052">
    <property type="entry name" value="CAP_GLY"/>
    <property type="match status" value="1"/>
</dbReference>
<dbReference type="SMART" id="SM00369">
    <property type="entry name" value="LRR_TYP"/>
    <property type="match status" value="6"/>
</dbReference>
<dbReference type="SUPFAM" id="SSF74924">
    <property type="entry name" value="Cap-Gly domain"/>
    <property type="match status" value="1"/>
</dbReference>
<dbReference type="SUPFAM" id="SSF52058">
    <property type="entry name" value="L domain-like"/>
    <property type="match status" value="1"/>
</dbReference>
<dbReference type="SUPFAM" id="SSF54236">
    <property type="entry name" value="Ubiquitin-like"/>
    <property type="match status" value="1"/>
</dbReference>
<dbReference type="PROSITE" id="PS00845">
    <property type="entry name" value="CAP_GLY_1"/>
    <property type="match status" value="1"/>
</dbReference>
<dbReference type="PROSITE" id="PS50245">
    <property type="entry name" value="CAP_GLY_2"/>
    <property type="match status" value="1"/>
</dbReference>
<dbReference type="PROSITE" id="PS51450">
    <property type="entry name" value="LRR"/>
    <property type="match status" value="6"/>
</dbReference>
<organism>
    <name type="scientific">Arabidopsis thaliana</name>
    <name type="common">Mouse-ear cress</name>
    <dbReference type="NCBI Taxonomy" id="3702"/>
    <lineage>
        <taxon>Eukaryota</taxon>
        <taxon>Viridiplantae</taxon>
        <taxon>Streptophyta</taxon>
        <taxon>Embryophyta</taxon>
        <taxon>Tracheophyta</taxon>
        <taxon>Spermatophyta</taxon>
        <taxon>Magnoliopsida</taxon>
        <taxon>eudicotyledons</taxon>
        <taxon>Gunneridae</taxon>
        <taxon>Pentapetalae</taxon>
        <taxon>rosids</taxon>
        <taxon>malvids</taxon>
        <taxon>Brassicales</taxon>
        <taxon>Brassicaceae</taxon>
        <taxon>Camelineae</taxon>
        <taxon>Arabidopsis</taxon>
    </lineage>
</organism>
<comment type="function">
    <text evidence="3 4">Essential tubulin-folding protein involved in the tubulin folding pathway. Not essential for cell viability. Probably involved in the binding of alpha-tubulin in the multimeric supercomplex.</text>
</comment>
<comment type="subunit">
    <text evidence="1">Supercomplex made of cofactors A to E. Cofactors A and D function by capturing and stabilizing tubulin in a quasi-native conformation. Cofactor E binds to the cofactor D-tubulin complex; interaction with cofactor C then causes the release of tubulin polypeptides that are committed to the native state (By similarity).</text>
</comment>
<comment type="subcellular location">
    <subcellularLocation>
        <location evidence="5">Cytoplasm</location>
    </subcellularLocation>
</comment>
<comment type="disruption phenotype">
    <text evidence="4">Embryo lethality. Embryo development limited to the formation of a few giant cells lacking microtubules but not actin filaments. Failure to localize KNOLLE in mitotic cells.</text>
</comment>
<comment type="miscellaneous">
    <text>Belongs to the PILZ group of genes that disrupt, when mutated, the microtubule cytoskeleton and produce mushroom-shaped ('pilz' in German) embryos.</text>
</comment>
<comment type="similarity">
    <text evidence="5">Belongs to the TBCE family.</text>
</comment>
<comment type="sequence caution" evidence="5">
    <conflict type="erroneous gene model prediction">
        <sequence resource="EMBL-CDS" id="AAG51824"/>
    </conflict>
</comment>
<sequence>MKAESSNESFIIGQRVHSLNDSRRVGTVKYVGDVEGYSGTWIGVDWDQDGDGKHNGSVNGVFYFNGRSQSSASFVRSQNLSRGITLLQALELRYRTISTKDEEDEMYVLSAGNRRVSIQLLGGDKIQDKLSRFEELTSASLSYLGVSSLGVSSDLGSILPNLKLLDLTGNLISDWEEIGALCEQLPALTTLNLSCNSLSSDIKSLPQLKNIRVLVLNNSGLSWTQVEILRRSLPGIEELHLMGNMISTITSTSSSDDQAFNSLRLLNLDDNCISDWSEVLKLSQLPCLEQLYLNKNKLSRIFQSVNGTESSEKGSDPFPSLSCLLLGANNIGDLASVDALNGFPQLVDIRLSENPISDPVRGGVPRFVLVARLTKVQVLNGSEVRAREKKDSEIRYVRMVMSKLNDKSGEIELLHPRFYELKKLHGIEDERASAENSGPKNIASGLISITLKCVGPSMGEKPHLTKKLPGSITVGKLKILSENFFKLKSIKPRLFLQEEGSPFPTALDDETATLLDVGICDGSTLLVDEES</sequence>
<reference key="1">
    <citation type="journal article" date="2002" name="Genes Dev.">
        <title>The Arabidopsis PILZ group genes encode tubulin-folding cofactor orthologs required for cell division but not cell growth.</title>
        <authorList>
            <person name="Steinborn K."/>
            <person name="Maulbetsch C."/>
            <person name="Priester B."/>
            <person name="Trautmann S."/>
            <person name="Pacher T."/>
            <person name="Geiges B."/>
            <person name="Kuettner F."/>
            <person name="Lepiniec L."/>
            <person name="Stierhof Y.-D."/>
            <person name="Schwarz H."/>
            <person name="Juergens G."/>
            <person name="Mayer U."/>
        </authorList>
    </citation>
    <scope>NUCLEOTIDE SEQUENCE [MRNA]</scope>
    <scope>FUNCTION</scope>
    <scope>DISRUPTION PHENOTYPE</scope>
    <source>
        <strain>cv. Landsberg erecta</strain>
        <strain>cv. Wassilewskija</strain>
        <tissue>Flower</tissue>
    </source>
</reference>
<reference key="2">
    <citation type="journal article" date="2000" name="Nature">
        <title>Sequence and analysis of chromosome 1 of the plant Arabidopsis thaliana.</title>
        <authorList>
            <person name="Theologis A."/>
            <person name="Ecker J.R."/>
            <person name="Palm C.J."/>
            <person name="Federspiel N.A."/>
            <person name="Kaul S."/>
            <person name="White O."/>
            <person name="Alonso J."/>
            <person name="Altafi H."/>
            <person name="Araujo R."/>
            <person name="Bowman C.L."/>
            <person name="Brooks S.Y."/>
            <person name="Buehler E."/>
            <person name="Chan A."/>
            <person name="Chao Q."/>
            <person name="Chen H."/>
            <person name="Cheuk R.F."/>
            <person name="Chin C.W."/>
            <person name="Chung M.K."/>
            <person name="Conn L."/>
            <person name="Conway A.B."/>
            <person name="Conway A.R."/>
            <person name="Creasy T.H."/>
            <person name="Dewar K."/>
            <person name="Dunn P."/>
            <person name="Etgu P."/>
            <person name="Feldblyum T.V."/>
            <person name="Feng J.-D."/>
            <person name="Fong B."/>
            <person name="Fujii C.Y."/>
            <person name="Gill J.E."/>
            <person name="Goldsmith A.D."/>
            <person name="Haas B."/>
            <person name="Hansen N.F."/>
            <person name="Hughes B."/>
            <person name="Huizar L."/>
            <person name="Hunter J.L."/>
            <person name="Jenkins J."/>
            <person name="Johnson-Hopson C."/>
            <person name="Khan S."/>
            <person name="Khaykin E."/>
            <person name="Kim C.J."/>
            <person name="Koo H.L."/>
            <person name="Kremenetskaia I."/>
            <person name="Kurtz D.B."/>
            <person name="Kwan A."/>
            <person name="Lam B."/>
            <person name="Langin-Hooper S."/>
            <person name="Lee A."/>
            <person name="Lee J.M."/>
            <person name="Lenz C.A."/>
            <person name="Li J.H."/>
            <person name="Li Y.-P."/>
            <person name="Lin X."/>
            <person name="Liu S.X."/>
            <person name="Liu Z.A."/>
            <person name="Luros J.S."/>
            <person name="Maiti R."/>
            <person name="Marziali A."/>
            <person name="Militscher J."/>
            <person name="Miranda M."/>
            <person name="Nguyen M."/>
            <person name="Nierman W.C."/>
            <person name="Osborne B.I."/>
            <person name="Pai G."/>
            <person name="Peterson J."/>
            <person name="Pham P.K."/>
            <person name="Rizzo M."/>
            <person name="Rooney T."/>
            <person name="Rowley D."/>
            <person name="Sakano H."/>
            <person name="Salzberg S.L."/>
            <person name="Schwartz J.R."/>
            <person name="Shinn P."/>
            <person name="Southwick A.M."/>
            <person name="Sun H."/>
            <person name="Tallon L.J."/>
            <person name="Tambunga G."/>
            <person name="Toriumi M.J."/>
            <person name="Town C.D."/>
            <person name="Utterback T."/>
            <person name="Van Aken S."/>
            <person name="Vaysberg M."/>
            <person name="Vysotskaia V.S."/>
            <person name="Walker M."/>
            <person name="Wu D."/>
            <person name="Yu G."/>
            <person name="Fraser C.M."/>
            <person name="Venter J.C."/>
            <person name="Davis R.W."/>
        </authorList>
    </citation>
    <scope>NUCLEOTIDE SEQUENCE [LARGE SCALE GENOMIC DNA]</scope>
    <source>
        <strain>cv. Columbia</strain>
    </source>
</reference>
<reference key="3">
    <citation type="journal article" date="2017" name="Plant J.">
        <title>Araport11: a complete reannotation of the Arabidopsis thaliana reference genome.</title>
        <authorList>
            <person name="Cheng C.Y."/>
            <person name="Krishnakumar V."/>
            <person name="Chan A.P."/>
            <person name="Thibaud-Nissen F."/>
            <person name="Schobel S."/>
            <person name="Town C.D."/>
        </authorList>
    </citation>
    <scope>GENOME REANNOTATION</scope>
    <source>
        <strain>cv. Columbia</strain>
    </source>
</reference>
<reference key="4">
    <citation type="journal article" date="2002" name="Science">
        <title>Functional annotation of a full-length Arabidopsis cDNA collection.</title>
        <authorList>
            <person name="Seki M."/>
            <person name="Narusaka M."/>
            <person name="Kamiya A."/>
            <person name="Ishida J."/>
            <person name="Satou M."/>
            <person name="Sakurai T."/>
            <person name="Nakajima M."/>
            <person name="Enju A."/>
            <person name="Akiyama K."/>
            <person name="Oono Y."/>
            <person name="Muramatsu M."/>
            <person name="Hayashizaki Y."/>
            <person name="Kawai J."/>
            <person name="Carninci P."/>
            <person name="Itoh M."/>
            <person name="Ishii Y."/>
            <person name="Arakawa T."/>
            <person name="Shibata K."/>
            <person name="Shinagawa A."/>
            <person name="Shinozaki K."/>
        </authorList>
    </citation>
    <scope>NUCLEOTIDE SEQUENCE [LARGE SCALE MRNA]</scope>
    <source>
        <strain>cv. Columbia</strain>
    </source>
</reference>
<reference key="5">
    <citation type="journal article" date="2003" name="Science">
        <title>Empirical analysis of transcriptional activity in the Arabidopsis genome.</title>
        <authorList>
            <person name="Yamada K."/>
            <person name="Lim J."/>
            <person name="Dale J.M."/>
            <person name="Chen H."/>
            <person name="Shinn P."/>
            <person name="Palm C.J."/>
            <person name="Southwick A.M."/>
            <person name="Wu H.C."/>
            <person name="Kim C.J."/>
            <person name="Nguyen M."/>
            <person name="Pham P.K."/>
            <person name="Cheuk R.F."/>
            <person name="Karlin-Newmann G."/>
            <person name="Liu S.X."/>
            <person name="Lam B."/>
            <person name="Sakano H."/>
            <person name="Wu T."/>
            <person name="Yu G."/>
            <person name="Miranda M."/>
            <person name="Quach H.L."/>
            <person name="Tripp M."/>
            <person name="Chang C.H."/>
            <person name="Lee J.M."/>
            <person name="Toriumi M.J."/>
            <person name="Chan M.M."/>
            <person name="Tang C.C."/>
            <person name="Onodera C.S."/>
            <person name="Deng J.M."/>
            <person name="Akiyama K."/>
            <person name="Ansari Y."/>
            <person name="Arakawa T."/>
            <person name="Banh J."/>
            <person name="Banno F."/>
            <person name="Bowser L."/>
            <person name="Brooks S.Y."/>
            <person name="Carninci P."/>
            <person name="Chao Q."/>
            <person name="Choy N."/>
            <person name="Enju A."/>
            <person name="Goldsmith A.D."/>
            <person name="Gurjal M."/>
            <person name="Hansen N.F."/>
            <person name="Hayashizaki Y."/>
            <person name="Johnson-Hopson C."/>
            <person name="Hsuan V.W."/>
            <person name="Iida K."/>
            <person name="Karnes M."/>
            <person name="Khan S."/>
            <person name="Koesema E."/>
            <person name="Ishida J."/>
            <person name="Jiang P.X."/>
            <person name="Jones T."/>
            <person name="Kawai J."/>
            <person name="Kamiya A."/>
            <person name="Meyers C."/>
            <person name="Nakajima M."/>
            <person name="Narusaka M."/>
            <person name="Seki M."/>
            <person name="Sakurai T."/>
            <person name="Satou M."/>
            <person name="Tamse R."/>
            <person name="Vaysberg M."/>
            <person name="Wallender E.K."/>
            <person name="Wong C."/>
            <person name="Yamamura Y."/>
            <person name="Yuan S."/>
            <person name="Shinozaki K."/>
            <person name="Davis R.W."/>
            <person name="Theologis A."/>
            <person name="Ecker J.R."/>
        </authorList>
    </citation>
    <scope>NUCLEOTIDE SEQUENCE [LARGE SCALE MRNA]</scope>
    <source>
        <strain>cv. Columbia</strain>
    </source>
</reference>
<reference key="6">
    <citation type="submission" date="2002-03" db="EMBL/GenBank/DDBJ databases">
        <title>Full-length cDNA from Arabidopsis thaliana.</title>
        <authorList>
            <person name="Brover V.V."/>
            <person name="Troukhan M.E."/>
            <person name="Alexandrov N.A."/>
            <person name="Lu Y.-P."/>
            <person name="Flavell R.B."/>
            <person name="Feldmann K.A."/>
        </authorList>
    </citation>
    <scope>NUCLEOTIDE SEQUENCE [LARGE SCALE MRNA]</scope>
</reference>
<reference key="7">
    <citation type="journal article" date="1999" name="Eur. J. Cell Biol.">
        <title>Mutations in the pilz group genes disrupt the microtubule cytoskeleton and uncouple cell cycle progression from cell division in Arabidopsis embryo and endosperm.</title>
        <authorList>
            <person name="Mayer U."/>
            <person name="Herzog U."/>
            <person name="Berger F."/>
            <person name="Inze D."/>
            <person name="Juergens G."/>
        </authorList>
    </citation>
    <scope>FUNCTION</scope>
</reference>
<protein>
    <recommendedName>
        <fullName>Tubulin-folding cofactor E</fullName>
        <shortName>AtTFCE</shortName>
    </recommendedName>
    <alternativeName>
        <fullName>Protein PFIFFERLING</fullName>
    </alternativeName>
</protein>
<evidence type="ECO:0000250" key="1"/>
<evidence type="ECO:0000255" key="2">
    <source>
        <dbReference type="PROSITE-ProRule" id="PRU00045"/>
    </source>
</evidence>
<evidence type="ECO:0000269" key="3">
    <source>
    </source>
</evidence>
<evidence type="ECO:0000269" key="4">
    <source>
    </source>
</evidence>
<evidence type="ECO:0000305" key="5"/>
<name>TBCE_ARATH</name>
<accession>Q8GRL7</accession>
<accession>Q8L405</accession>
<accession>Q9C9I1</accession>
<keyword id="KW-0143">Chaperone</keyword>
<keyword id="KW-0963">Cytoplasm</keyword>
<keyword id="KW-0433">Leucine-rich repeat</keyword>
<keyword id="KW-1185">Reference proteome</keyword>
<keyword id="KW-0677">Repeat</keyword>
<gene>
    <name type="primary">TFCE</name>
    <name type="synonym">PFI</name>
    <name type="synonym">TBCE</name>
    <name type="ordered locus">At1g71440</name>
    <name type="ORF">F26A9.18</name>
</gene>